<comment type="function">
    <text evidence="1">Binds directly to 23S rRNA. The L1 stalk is quite mobile in the ribosome, and is involved in E site tRNA release.</text>
</comment>
<comment type="function">
    <text evidence="1">Protein L1 is also a translational repressor protein, it controls the translation of the L11 operon by binding to its mRNA.</text>
</comment>
<comment type="subunit">
    <text evidence="1">Part of the 50S ribosomal subunit.</text>
</comment>
<comment type="similarity">
    <text evidence="1">Belongs to the universal ribosomal protein uL1 family.</text>
</comment>
<accession>Q1R5U9</accession>
<name>RL1_ECOUT</name>
<evidence type="ECO:0000255" key="1">
    <source>
        <dbReference type="HAMAP-Rule" id="MF_01318"/>
    </source>
</evidence>
<evidence type="ECO:0000305" key="2"/>
<dbReference type="EMBL" id="CP000243">
    <property type="protein sequence ID" value="ABE09265.1"/>
    <property type="molecule type" value="Genomic_DNA"/>
</dbReference>
<dbReference type="RefSeq" id="WP_001096684.1">
    <property type="nucleotide sequence ID" value="NZ_CP064825.1"/>
</dbReference>
<dbReference type="SMR" id="Q1R5U9"/>
<dbReference type="GeneID" id="93777910"/>
<dbReference type="KEGG" id="eci:UTI89_C3836"/>
<dbReference type="HOGENOM" id="CLU_062853_0_0_6"/>
<dbReference type="Proteomes" id="UP000001952">
    <property type="component" value="Chromosome"/>
</dbReference>
<dbReference type="GO" id="GO:0022625">
    <property type="term" value="C:cytosolic large ribosomal subunit"/>
    <property type="evidence" value="ECO:0007669"/>
    <property type="project" value="TreeGrafter"/>
</dbReference>
<dbReference type="GO" id="GO:0019843">
    <property type="term" value="F:rRNA binding"/>
    <property type="evidence" value="ECO:0007669"/>
    <property type="project" value="UniProtKB-UniRule"/>
</dbReference>
<dbReference type="GO" id="GO:0003735">
    <property type="term" value="F:structural constituent of ribosome"/>
    <property type="evidence" value="ECO:0007669"/>
    <property type="project" value="InterPro"/>
</dbReference>
<dbReference type="GO" id="GO:0000049">
    <property type="term" value="F:tRNA binding"/>
    <property type="evidence" value="ECO:0007669"/>
    <property type="project" value="UniProtKB-KW"/>
</dbReference>
<dbReference type="GO" id="GO:0006417">
    <property type="term" value="P:regulation of translation"/>
    <property type="evidence" value="ECO:0007669"/>
    <property type="project" value="UniProtKB-KW"/>
</dbReference>
<dbReference type="GO" id="GO:0006412">
    <property type="term" value="P:translation"/>
    <property type="evidence" value="ECO:0007669"/>
    <property type="project" value="UniProtKB-UniRule"/>
</dbReference>
<dbReference type="CDD" id="cd00403">
    <property type="entry name" value="Ribosomal_L1"/>
    <property type="match status" value="1"/>
</dbReference>
<dbReference type="FunFam" id="3.40.50.790:FF:000001">
    <property type="entry name" value="50S ribosomal protein L1"/>
    <property type="match status" value="1"/>
</dbReference>
<dbReference type="Gene3D" id="3.30.190.20">
    <property type="match status" value="1"/>
</dbReference>
<dbReference type="Gene3D" id="3.40.50.790">
    <property type="match status" value="1"/>
</dbReference>
<dbReference type="HAMAP" id="MF_01318_B">
    <property type="entry name" value="Ribosomal_uL1_B"/>
    <property type="match status" value="1"/>
</dbReference>
<dbReference type="InterPro" id="IPR005878">
    <property type="entry name" value="Ribosom_uL1_bac-type"/>
</dbReference>
<dbReference type="InterPro" id="IPR002143">
    <property type="entry name" value="Ribosomal_uL1"/>
</dbReference>
<dbReference type="InterPro" id="IPR023674">
    <property type="entry name" value="Ribosomal_uL1-like"/>
</dbReference>
<dbReference type="InterPro" id="IPR028364">
    <property type="entry name" value="Ribosomal_uL1/biogenesis"/>
</dbReference>
<dbReference type="InterPro" id="IPR016095">
    <property type="entry name" value="Ribosomal_uL1_3-a/b-sand"/>
</dbReference>
<dbReference type="InterPro" id="IPR023673">
    <property type="entry name" value="Ribosomal_uL1_CS"/>
</dbReference>
<dbReference type="NCBIfam" id="TIGR01169">
    <property type="entry name" value="rplA_bact"/>
    <property type="match status" value="1"/>
</dbReference>
<dbReference type="PANTHER" id="PTHR36427">
    <property type="entry name" value="54S RIBOSOMAL PROTEIN L1, MITOCHONDRIAL"/>
    <property type="match status" value="1"/>
</dbReference>
<dbReference type="PANTHER" id="PTHR36427:SF3">
    <property type="entry name" value="LARGE RIBOSOMAL SUBUNIT PROTEIN UL1M"/>
    <property type="match status" value="1"/>
</dbReference>
<dbReference type="Pfam" id="PF00687">
    <property type="entry name" value="Ribosomal_L1"/>
    <property type="match status" value="1"/>
</dbReference>
<dbReference type="PIRSF" id="PIRSF002155">
    <property type="entry name" value="Ribosomal_L1"/>
    <property type="match status" value="1"/>
</dbReference>
<dbReference type="SUPFAM" id="SSF56808">
    <property type="entry name" value="Ribosomal protein L1"/>
    <property type="match status" value="1"/>
</dbReference>
<dbReference type="PROSITE" id="PS01199">
    <property type="entry name" value="RIBOSOMAL_L1"/>
    <property type="match status" value="1"/>
</dbReference>
<reference key="1">
    <citation type="journal article" date="2006" name="Proc. Natl. Acad. Sci. U.S.A.">
        <title>Identification of genes subject to positive selection in uropathogenic strains of Escherichia coli: a comparative genomics approach.</title>
        <authorList>
            <person name="Chen S.L."/>
            <person name="Hung C.-S."/>
            <person name="Xu J."/>
            <person name="Reigstad C.S."/>
            <person name="Magrini V."/>
            <person name="Sabo A."/>
            <person name="Blasiar D."/>
            <person name="Bieri T."/>
            <person name="Meyer R.R."/>
            <person name="Ozersky P."/>
            <person name="Armstrong J.R."/>
            <person name="Fulton R.S."/>
            <person name="Latreille J.P."/>
            <person name="Spieth J."/>
            <person name="Hooton T.M."/>
            <person name="Mardis E.R."/>
            <person name="Hultgren S.J."/>
            <person name="Gordon J.I."/>
        </authorList>
    </citation>
    <scope>NUCLEOTIDE SEQUENCE [LARGE SCALE GENOMIC DNA]</scope>
    <source>
        <strain>UTI89 / UPEC</strain>
    </source>
</reference>
<gene>
    <name evidence="1" type="primary">rplA</name>
    <name type="ordered locus">UTI89_C3836</name>
</gene>
<sequence length="234" mass="24730">MAKLTKRMRVIREKVDATKQYDINEAIALLKELATAKFVESVDVAVNLGIDARKSDQNVRGATVLPHGTGRSVRVAVFTQGANAEAAKAAGAELVGMEDLADQIKKGEMNFDVVIASPDAMRVVGQLGQVLGPRGLMPNPKVGTVTPNVAEAVKNAKAGQVRYRNDKNGIIHTTIGKVDFDADKLKENLEALLVALKKAKPTQAKGVYIKKVSISTTMGAGVAVDQAGLSASVN</sequence>
<proteinExistence type="inferred from homology"/>
<feature type="chain" id="PRO_0000308004" description="Large ribosomal subunit protein uL1">
    <location>
        <begin position="1"/>
        <end position="234"/>
    </location>
</feature>
<protein>
    <recommendedName>
        <fullName evidence="1">Large ribosomal subunit protein uL1</fullName>
    </recommendedName>
    <alternativeName>
        <fullName evidence="2">50S ribosomal protein L1</fullName>
    </alternativeName>
</protein>
<organism>
    <name type="scientific">Escherichia coli (strain UTI89 / UPEC)</name>
    <dbReference type="NCBI Taxonomy" id="364106"/>
    <lineage>
        <taxon>Bacteria</taxon>
        <taxon>Pseudomonadati</taxon>
        <taxon>Pseudomonadota</taxon>
        <taxon>Gammaproteobacteria</taxon>
        <taxon>Enterobacterales</taxon>
        <taxon>Enterobacteriaceae</taxon>
        <taxon>Escherichia</taxon>
    </lineage>
</organism>
<keyword id="KW-0678">Repressor</keyword>
<keyword id="KW-0687">Ribonucleoprotein</keyword>
<keyword id="KW-0689">Ribosomal protein</keyword>
<keyword id="KW-0694">RNA-binding</keyword>
<keyword id="KW-0699">rRNA-binding</keyword>
<keyword id="KW-0810">Translation regulation</keyword>
<keyword id="KW-0820">tRNA-binding</keyword>